<geneLocation type="chloroplast"/>
<keyword id="KW-0150">Chloroplast</keyword>
<keyword id="KW-0507">mRNA processing</keyword>
<keyword id="KW-0934">Plastid</keyword>
<keyword id="KW-0694">RNA-binding</keyword>
<keyword id="KW-0819">tRNA processing</keyword>
<proteinExistence type="inferred from homology"/>
<comment type="function">
    <text evidence="1">Usually encoded in the trnK tRNA gene intron. Probably assists in splicing its own and other chloroplast group II introns.</text>
</comment>
<comment type="subcellular location">
    <subcellularLocation>
        <location>Plastid</location>
        <location>Chloroplast</location>
    </subcellularLocation>
</comment>
<comment type="similarity">
    <text evidence="1">Belongs to the intron maturase 2 family. MatK subfamily.</text>
</comment>
<dbReference type="EMBL" id="AF368202">
    <property type="protein sequence ID" value="AAL37570.2"/>
    <property type="molecule type" value="Genomic_DNA"/>
</dbReference>
<dbReference type="GO" id="GO:0009507">
    <property type="term" value="C:chloroplast"/>
    <property type="evidence" value="ECO:0007669"/>
    <property type="project" value="UniProtKB-SubCell"/>
</dbReference>
<dbReference type="GO" id="GO:0003723">
    <property type="term" value="F:RNA binding"/>
    <property type="evidence" value="ECO:0007669"/>
    <property type="project" value="UniProtKB-KW"/>
</dbReference>
<dbReference type="GO" id="GO:0006397">
    <property type="term" value="P:mRNA processing"/>
    <property type="evidence" value="ECO:0007669"/>
    <property type="project" value="UniProtKB-KW"/>
</dbReference>
<dbReference type="GO" id="GO:0008380">
    <property type="term" value="P:RNA splicing"/>
    <property type="evidence" value="ECO:0007669"/>
    <property type="project" value="UniProtKB-UniRule"/>
</dbReference>
<dbReference type="GO" id="GO:0008033">
    <property type="term" value="P:tRNA processing"/>
    <property type="evidence" value="ECO:0007669"/>
    <property type="project" value="UniProtKB-KW"/>
</dbReference>
<dbReference type="HAMAP" id="MF_01390">
    <property type="entry name" value="MatK"/>
    <property type="match status" value="1"/>
</dbReference>
<dbReference type="InterPro" id="IPR024937">
    <property type="entry name" value="Domain_X"/>
</dbReference>
<dbReference type="InterPro" id="IPR002866">
    <property type="entry name" value="Maturase_MatK"/>
</dbReference>
<dbReference type="InterPro" id="IPR024942">
    <property type="entry name" value="Maturase_MatK_N"/>
</dbReference>
<dbReference type="PANTHER" id="PTHR34811">
    <property type="entry name" value="MATURASE K"/>
    <property type="match status" value="1"/>
</dbReference>
<dbReference type="PANTHER" id="PTHR34811:SF1">
    <property type="entry name" value="MATURASE K"/>
    <property type="match status" value="1"/>
</dbReference>
<dbReference type="Pfam" id="PF01348">
    <property type="entry name" value="Intron_maturas2"/>
    <property type="match status" value="1"/>
</dbReference>
<dbReference type="Pfam" id="PF01824">
    <property type="entry name" value="MatK_N"/>
    <property type="match status" value="1"/>
</dbReference>
<reference key="1">
    <citation type="journal article" date="2005" name="Plant Syst. Evol.">
        <title>Relationships within Myrtaceae sensu lato based on a matK phylogeny.</title>
        <authorList>
            <person name="Wilson P.G."/>
            <person name="O'Brien M.M."/>
            <person name="Heslewood M.M."/>
            <person name="Quinn C.J."/>
        </authorList>
    </citation>
    <scope>NUCLEOTIDE SEQUENCE [GENOMIC DNA]</scope>
</reference>
<accession>Q8WJ31</accession>
<evidence type="ECO:0000255" key="1">
    <source>
        <dbReference type="HAMAP-Rule" id="MF_01390"/>
    </source>
</evidence>
<name>MATK_BACSM</name>
<organism>
    <name type="scientific">Backhousia subargentea</name>
    <name type="common">Giant ironwood</name>
    <name type="synonym">Choricarpia subargentea</name>
    <dbReference type="NCBI Taxonomy" id="178123"/>
    <lineage>
        <taxon>Eukaryota</taxon>
        <taxon>Viridiplantae</taxon>
        <taxon>Streptophyta</taxon>
        <taxon>Embryophyta</taxon>
        <taxon>Tracheophyta</taxon>
        <taxon>Spermatophyta</taxon>
        <taxon>Magnoliopsida</taxon>
        <taxon>eudicotyledons</taxon>
        <taxon>Gunneridae</taxon>
        <taxon>Pentapetalae</taxon>
        <taxon>rosids</taxon>
        <taxon>malvids</taxon>
        <taxon>Myrtales</taxon>
        <taxon>Myrtaceae</taxon>
        <taxon>Myrtoideae</taxon>
        <taxon>Backhousieae</taxon>
        <taxon>Backhousia</taxon>
    </lineage>
</organism>
<feature type="chain" id="PRO_0000143332" description="Maturase K">
    <location>
        <begin position="1"/>
        <end position="503"/>
    </location>
</feature>
<gene>
    <name evidence="1" type="primary">matK</name>
</gene>
<protein>
    <recommendedName>
        <fullName evidence="1">Maturase K</fullName>
    </recommendedName>
    <alternativeName>
        <fullName evidence="1">Intron maturase</fullName>
    </alternativeName>
</protein>
<sequence>MEEFQRYLELDRSRQHDFLYPLLFREYIYALAHDHGLNKSILSENAGYGNKSSSIIVKRLITRMYQQNPLIFSANDSIQNQFFGHNKNLYSQIISEGFAVIVEIPFSLRLVSFLERKEIAKSQNLQSIHSIFPFLEDKFSHLDYVSXVLIPYHIHLEILVQTLRYWVKDASSLHLLRFFLHEYWNTLITPKKYITLFSKGNPRLFLFLYNSHICEYESIFLFLRNKSSHLRSTSSGIFFERIYFYVKIKHFVKVFFDNDFQCILWFFKDPFMHYVKYQGKSILASKXTPLLMNKWKYYLVNLWQYHFYAWFQPGRININQLCXYSLDFLGYRSSVRLNSSVVXXQMLKNLFLINNAMKXFETIVPIIPLIGSLSKANFCNTLGHPISKPTRSDSSDSDIINRFLRICRNLSHYHSGSSKKKSLYRVKYILRLSCVKTLARKHKITIRTFLKKSGSEFLEKFLTEEEVVLSLIFPRTYSTSRRLYXZQSWYLDITSINDLVNYE</sequence>